<evidence type="ECO:0000255" key="1">
    <source>
        <dbReference type="HAMAP-Rule" id="MF_01326"/>
    </source>
</evidence>
<evidence type="ECO:0000305" key="2"/>
<protein>
    <recommendedName>
        <fullName evidence="1">Large ribosomal subunit protein uL24</fullName>
    </recommendedName>
    <alternativeName>
        <fullName evidence="2">50S ribosomal protein L24</fullName>
    </alternativeName>
</protein>
<feature type="chain" id="PRO_0000355643" description="Large ribosomal subunit protein uL24">
    <location>
        <begin position="1"/>
        <end position="105"/>
    </location>
</feature>
<gene>
    <name evidence="1" type="primary">rplX</name>
    <name type="ordered locus">ACICU_03267</name>
</gene>
<organism>
    <name type="scientific">Acinetobacter baumannii (strain ACICU)</name>
    <dbReference type="NCBI Taxonomy" id="405416"/>
    <lineage>
        <taxon>Bacteria</taxon>
        <taxon>Pseudomonadati</taxon>
        <taxon>Pseudomonadota</taxon>
        <taxon>Gammaproteobacteria</taxon>
        <taxon>Moraxellales</taxon>
        <taxon>Moraxellaceae</taxon>
        <taxon>Acinetobacter</taxon>
        <taxon>Acinetobacter calcoaceticus/baumannii complex</taxon>
    </lineage>
</organism>
<proteinExistence type="inferred from homology"/>
<comment type="function">
    <text evidence="1">One of two assembly initiator proteins, it binds directly to the 5'-end of the 23S rRNA, where it nucleates assembly of the 50S subunit.</text>
</comment>
<comment type="function">
    <text evidence="1">One of the proteins that surrounds the polypeptide exit tunnel on the outside of the subunit.</text>
</comment>
<comment type="subunit">
    <text evidence="1">Part of the 50S ribosomal subunit.</text>
</comment>
<comment type="similarity">
    <text evidence="1">Belongs to the universal ribosomal protein uL24 family.</text>
</comment>
<comment type="sequence caution" evidence="2">
    <conflict type="erroneous initiation">
        <sequence resource="EMBL-CDS" id="ACC58579"/>
    </conflict>
</comment>
<name>RL24_ACIBC</name>
<sequence length="105" mass="11168">MAKIKKGDQVIVIAGKEKGKQGTVLSVSEDRVKVEGLNLVKKHQKPNRVTGAEGGIVTQEASLHISNVAILNATTQKADRVGYQVIDGVKTRVYKSTGESVAVAK</sequence>
<accession>B2HZ97</accession>
<keyword id="KW-0687">Ribonucleoprotein</keyword>
<keyword id="KW-0689">Ribosomal protein</keyword>
<keyword id="KW-0694">RNA-binding</keyword>
<keyword id="KW-0699">rRNA-binding</keyword>
<dbReference type="EMBL" id="CP000863">
    <property type="protein sequence ID" value="ACC58579.1"/>
    <property type="status" value="ALT_INIT"/>
    <property type="molecule type" value="Genomic_DNA"/>
</dbReference>
<dbReference type="RefSeq" id="WP_001062685.1">
    <property type="nucleotide sequence ID" value="NZ_CP031380.1"/>
</dbReference>
<dbReference type="SMR" id="B2HZ97"/>
<dbReference type="GeneID" id="92895306"/>
<dbReference type="KEGG" id="abc:ACICU_03267"/>
<dbReference type="HOGENOM" id="CLU_093315_2_2_6"/>
<dbReference type="Proteomes" id="UP000008839">
    <property type="component" value="Chromosome"/>
</dbReference>
<dbReference type="GO" id="GO:1990904">
    <property type="term" value="C:ribonucleoprotein complex"/>
    <property type="evidence" value="ECO:0007669"/>
    <property type="project" value="UniProtKB-KW"/>
</dbReference>
<dbReference type="GO" id="GO:0005840">
    <property type="term" value="C:ribosome"/>
    <property type="evidence" value="ECO:0007669"/>
    <property type="project" value="UniProtKB-KW"/>
</dbReference>
<dbReference type="GO" id="GO:0019843">
    <property type="term" value="F:rRNA binding"/>
    <property type="evidence" value="ECO:0007669"/>
    <property type="project" value="UniProtKB-UniRule"/>
</dbReference>
<dbReference type="GO" id="GO:0003735">
    <property type="term" value="F:structural constituent of ribosome"/>
    <property type="evidence" value="ECO:0007669"/>
    <property type="project" value="InterPro"/>
</dbReference>
<dbReference type="GO" id="GO:0006412">
    <property type="term" value="P:translation"/>
    <property type="evidence" value="ECO:0007669"/>
    <property type="project" value="UniProtKB-UniRule"/>
</dbReference>
<dbReference type="CDD" id="cd06089">
    <property type="entry name" value="KOW_RPL26"/>
    <property type="match status" value="1"/>
</dbReference>
<dbReference type="FunFam" id="2.30.30.30:FF:000004">
    <property type="entry name" value="50S ribosomal protein L24"/>
    <property type="match status" value="1"/>
</dbReference>
<dbReference type="Gene3D" id="2.30.30.30">
    <property type="match status" value="1"/>
</dbReference>
<dbReference type="HAMAP" id="MF_01326_B">
    <property type="entry name" value="Ribosomal_uL24_B"/>
    <property type="match status" value="1"/>
</dbReference>
<dbReference type="InterPro" id="IPR005824">
    <property type="entry name" value="KOW"/>
</dbReference>
<dbReference type="InterPro" id="IPR014722">
    <property type="entry name" value="Rib_uL2_dom2"/>
</dbReference>
<dbReference type="InterPro" id="IPR003256">
    <property type="entry name" value="Ribosomal_uL24"/>
</dbReference>
<dbReference type="InterPro" id="IPR005825">
    <property type="entry name" value="Ribosomal_uL24_CS"/>
</dbReference>
<dbReference type="InterPro" id="IPR041988">
    <property type="entry name" value="Ribosomal_uL24_KOW"/>
</dbReference>
<dbReference type="InterPro" id="IPR008991">
    <property type="entry name" value="Translation_prot_SH3-like_sf"/>
</dbReference>
<dbReference type="NCBIfam" id="TIGR01079">
    <property type="entry name" value="rplX_bact"/>
    <property type="match status" value="1"/>
</dbReference>
<dbReference type="PANTHER" id="PTHR12903">
    <property type="entry name" value="MITOCHONDRIAL RIBOSOMAL PROTEIN L24"/>
    <property type="match status" value="1"/>
</dbReference>
<dbReference type="Pfam" id="PF00467">
    <property type="entry name" value="KOW"/>
    <property type="match status" value="1"/>
</dbReference>
<dbReference type="Pfam" id="PF17136">
    <property type="entry name" value="ribosomal_L24"/>
    <property type="match status" value="1"/>
</dbReference>
<dbReference type="SMART" id="SM00739">
    <property type="entry name" value="KOW"/>
    <property type="match status" value="1"/>
</dbReference>
<dbReference type="SUPFAM" id="SSF50104">
    <property type="entry name" value="Translation proteins SH3-like domain"/>
    <property type="match status" value="1"/>
</dbReference>
<dbReference type="PROSITE" id="PS01108">
    <property type="entry name" value="RIBOSOMAL_L24"/>
    <property type="match status" value="1"/>
</dbReference>
<reference key="1">
    <citation type="journal article" date="2008" name="Antimicrob. Agents Chemother.">
        <title>Whole-genome pyrosequencing of an epidemic multidrug-resistant Acinetobacter baumannii strain belonging to the European clone II group.</title>
        <authorList>
            <person name="Iacono M."/>
            <person name="Villa L."/>
            <person name="Fortini D."/>
            <person name="Bordoni R."/>
            <person name="Imperi F."/>
            <person name="Bonnal R.J."/>
            <person name="Sicheritz-Ponten T."/>
            <person name="De Bellis G."/>
            <person name="Visca P."/>
            <person name="Cassone A."/>
            <person name="Carattoli A."/>
        </authorList>
    </citation>
    <scope>NUCLEOTIDE SEQUENCE [LARGE SCALE GENOMIC DNA]</scope>
    <source>
        <strain>ACICU</strain>
    </source>
</reference>